<keyword id="KW-0052">Apoplast</keyword>
<keyword id="KW-1015">Disulfide bond</keyword>
<keyword id="KW-0325">Glycoprotein</keyword>
<keyword id="KW-0464">Manganese</keyword>
<keyword id="KW-0479">Metal-binding</keyword>
<keyword id="KW-1185">Reference proteome</keyword>
<keyword id="KW-0964">Secreted</keyword>
<keyword id="KW-0732">Signal</keyword>
<evidence type="ECO:0000250" key="1"/>
<evidence type="ECO:0000255" key="2"/>
<evidence type="ECO:0000305" key="3"/>
<organism>
    <name type="scientific">Arabidopsis thaliana</name>
    <name type="common">Mouse-ear cress</name>
    <dbReference type="NCBI Taxonomy" id="3702"/>
    <lineage>
        <taxon>Eukaryota</taxon>
        <taxon>Viridiplantae</taxon>
        <taxon>Streptophyta</taxon>
        <taxon>Embryophyta</taxon>
        <taxon>Tracheophyta</taxon>
        <taxon>Spermatophyta</taxon>
        <taxon>Magnoliopsida</taxon>
        <taxon>eudicotyledons</taxon>
        <taxon>Gunneridae</taxon>
        <taxon>Pentapetalae</taxon>
        <taxon>rosids</taxon>
        <taxon>malvids</taxon>
        <taxon>Brassicales</taxon>
        <taxon>Brassicaceae</taxon>
        <taxon>Camelineae</taxon>
        <taxon>Arabidopsis</taxon>
    </lineage>
</organism>
<dbReference type="EMBL" id="AC068602">
    <property type="protein sequence ID" value="AAF79303.1"/>
    <property type="molecule type" value="Genomic_DNA"/>
</dbReference>
<dbReference type="EMBL" id="CP002684">
    <property type="protein sequence ID" value="AEE29786.1"/>
    <property type="molecule type" value="Genomic_DNA"/>
</dbReference>
<dbReference type="EMBL" id="AY084870">
    <property type="protein sequence ID" value="AAM61433.1"/>
    <property type="molecule type" value="mRNA"/>
</dbReference>
<dbReference type="PIR" id="F86323">
    <property type="entry name" value="F86323"/>
</dbReference>
<dbReference type="RefSeq" id="NP_173332.1">
    <property type="nucleotide sequence ID" value="NM_101755.3"/>
</dbReference>
<dbReference type="SMR" id="Q9LMC9"/>
<dbReference type="FunCoup" id="Q9LMC9">
    <property type="interactions" value="53"/>
</dbReference>
<dbReference type="STRING" id="3702.Q9LMC9"/>
<dbReference type="GlyGen" id="Q9LMC9">
    <property type="glycosylation" value="2 sites"/>
</dbReference>
<dbReference type="PaxDb" id="3702-AT1G18980.1"/>
<dbReference type="ProteomicsDB" id="248527"/>
<dbReference type="EnsemblPlants" id="AT1G18980.1">
    <property type="protein sequence ID" value="AT1G18980.1"/>
    <property type="gene ID" value="AT1G18980"/>
</dbReference>
<dbReference type="GeneID" id="838479"/>
<dbReference type="Gramene" id="AT1G18980.1">
    <property type="protein sequence ID" value="AT1G18980.1"/>
    <property type="gene ID" value="AT1G18980"/>
</dbReference>
<dbReference type="KEGG" id="ath:AT1G18980"/>
<dbReference type="Araport" id="AT1G18980"/>
<dbReference type="TAIR" id="AT1G18980"/>
<dbReference type="eggNOG" id="ENOG502QSRM">
    <property type="taxonomic scope" value="Eukaryota"/>
</dbReference>
<dbReference type="HOGENOM" id="CLU_015790_0_3_1"/>
<dbReference type="InParanoid" id="Q9LMC9"/>
<dbReference type="OMA" id="WNVGKVK"/>
<dbReference type="OrthoDB" id="1921208at2759"/>
<dbReference type="PhylomeDB" id="Q9LMC9"/>
<dbReference type="PRO" id="PR:Q9LMC9"/>
<dbReference type="Proteomes" id="UP000006548">
    <property type="component" value="Chromosome 1"/>
</dbReference>
<dbReference type="ExpressionAtlas" id="Q9LMC9">
    <property type="expression patterns" value="baseline and differential"/>
</dbReference>
<dbReference type="GO" id="GO:0048046">
    <property type="term" value="C:apoplast"/>
    <property type="evidence" value="ECO:0007669"/>
    <property type="project" value="UniProtKB-SubCell"/>
</dbReference>
<dbReference type="GO" id="GO:0030145">
    <property type="term" value="F:manganese ion binding"/>
    <property type="evidence" value="ECO:0007669"/>
    <property type="project" value="InterPro"/>
</dbReference>
<dbReference type="CDD" id="cd02241">
    <property type="entry name" value="cupin_OxOx"/>
    <property type="match status" value="1"/>
</dbReference>
<dbReference type="FunFam" id="2.60.120.10:FF:000005">
    <property type="entry name" value="Germin-like protein subfamily 1 member 8"/>
    <property type="match status" value="1"/>
</dbReference>
<dbReference type="Gene3D" id="2.60.120.10">
    <property type="entry name" value="Jelly Rolls"/>
    <property type="match status" value="1"/>
</dbReference>
<dbReference type="InterPro" id="IPR006045">
    <property type="entry name" value="Cupin_1"/>
</dbReference>
<dbReference type="InterPro" id="IPR001929">
    <property type="entry name" value="Germin"/>
</dbReference>
<dbReference type="InterPro" id="IPR014710">
    <property type="entry name" value="RmlC-like_jellyroll"/>
</dbReference>
<dbReference type="InterPro" id="IPR011051">
    <property type="entry name" value="RmlC_Cupin_sf"/>
</dbReference>
<dbReference type="PANTHER" id="PTHR31238">
    <property type="entry name" value="GERMIN-LIKE PROTEIN SUBFAMILY 3 MEMBER 3"/>
    <property type="match status" value="1"/>
</dbReference>
<dbReference type="Pfam" id="PF00190">
    <property type="entry name" value="Cupin_1"/>
    <property type="match status" value="1"/>
</dbReference>
<dbReference type="PRINTS" id="PR00325">
    <property type="entry name" value="GERMIN"/>
</dbReference>
<dbReference type="SMART" id="SM00835">
    <property type="entry name" value="Cupin_1"/>
    <property type="match status" value="1"/>
</dbReference>
<dbReference type="SUPFAM" id="SSF51182">
    <property type="entry name" value="RmlC-like cupins"/>
    <property type="match status" value="1"/>
</dbReference>
<name>GLT2_ARATH</name>
<comment type="function">
    <text>May play a role in plant defense. Probably has no oxalate oxidase activity even if the active site is conserved.</text>
</comment>
<comment type="subunit">
    <text evidence="1">Oligomer (believed to be a pentamer but probably hexamer).</text>
</comment>
<comment type="subcellular location">
    <subcellularLocation>
        <location evidence="1">Secreted</location>
        <location evidence="1">Extracellular space</location>
        <location evidence="1">Apoplast</location>
    </subcellularLocation>
</comment>
<comment type="similarity">
    <text evidence="3">Belongs to the germin family.</text>
</comment>
<protein>
    <recommendedName>
        <fullName>Germin-like protein subfamily T member 2</fullName>
    </recommendedName>
</protein>
<feature type="signal peptide" evidence="2">
    <location>
        <begin position="1"/>
        <end position="27"/>
    </location>
</feature>
<feature type="chain" id="PRO_0000010831" description="Germin-like protein subfamily T member 2">
    <location>
        <begin position="28"/>
        <end position="220"/>
    </location>
</feature>
<feature type="domain" description="Cupin type-1" evidence="2">
    <location>
        <begin position="64"/>
        <end position="212"/>
    </location>
</feature>
<feature type="binding site" evidence="1">
    <location>
        <position position="112"/>
    </location>
    <ligand>
        <name>Mn(2+)</name>
        <dbReference type="ChEBI" id="CHEBI:29035"/>
    </ligand>
</feature>
<feature type="binding site" evidence="1">
    <location>
        <position position="114"/>
    </location>
    <ligand>
        <name>Mn(2+)</name>
        <dbReference type="ChEBI" id="CHEBI:29035"/>
    </ligand>
</feature>
<feature type="binding site" evidence="1">
    <location>
        <position position="119"/>
    </location>
    <ligand>
        <name>Mn(2+)</name>
        <dbReference type="ChEBI" id="CHEBI:29035"/>
    </ligand>
</feature>
<feature type="binding site" evidence="1">
    <location>
        <position position="158"/>
    </location>
    <ligand>
        <name>Mn(2+)</name>
        <dbReference type="ChEBI" id="CHEBI:29035"/>
    </ligand>
</feature>
<feature type="glycosylation site" description="N-linked (GlcNAc...) asparagine" evidence="2">
    <location>
        <position position="71"/>
    </location>
</feature>
<feature type="glycosylation site" description="N-linked (GlcNAc...) asparagine" evidence="2">
    <location>
        <position position="136"/>
    </location>
</feature>
<feature type="disulfide bond" evidence="1">
    <location>
        <begin position="37"/>
        <end position="52"/>
    </location>
</feature>
<proteinExistence type="evidence at transcript level"/>
<sequence length="220" mass="23184">MTTLQISSSLFRSFLLVICVFVIPSLSSDSDPLQDFCVGDLKASPSINGFPCKSSVSASDFFFSGLGGPLNTSTPNGVAVSPANVLTFPGLNTLGLSMNNVEFAPGGVNPPHSHPRATEAGVVIEGSVFVGFLTTNNTLFSKVLNAGEMFVVPRGLVHFQWNVGKVKARLITSFNSQLPGSAVLPSTLFGSNPTIPNAVLTKTFRTDDVTVNKLKSKFAV</sequence>
<accession>Q9LMC9</accession>
<gene>
    <name type="ordered locus">At1g18980</name>
    <name type="ORF">F14D16.13</name>
    <name type="ORF">F14D16_8</name>
</gene>
<reference key="1">
    <citation type="journal article" date="2000" name="Nature">
        <title>Sequence and analysis of chromosome 1 of the plant Arabidopsis thaliana.</title>
        <authorList>
            <person name="Theologis A."/>
            <person name="Ecker J.R."/>
            <person name="Palm C.J."/>
            <person name="Federspiel N.A."/>
            <person name="Kaul S."/>
            <person name="White O."/>
            <person name="Alonso J."/>
            <person name="Altafi H."/>
            <person name="Araujo R."/>
            <person name="Bowman C.L."/>
            <person name="Brooks S.Y."/>
            <person name="Buehler E."/>
            <person name="Chan A."/>
            <person name="Chao Q."/>
            <person name="Chen H."/>
            <person name="Cheuk R.F."/>
            <person name="Chin C.W."/>
            <person name="Chung M.K."/>
            <person name="Conn L."/>
            <person name="Conway A.B."/>
            <person name="Conway A.R."/>
            <person name="Creasy T.H."/>
            <person name="Dewar K."/>
            <person name="Dunn P."/>
            <person name="Etgu P."/>
            <person name="Feldblyum T.V."/>
            <person name="Feng J.-D."/>
            <person name="Fong B."/>
            <person name="Fujii C.Y."/>
            <person name="Gill J.E."/>
            <person name="Goldsmith A.D."/>
            <person name="Haas B."/>
            <person name="Hansen N.F."/>
            <person name="Hughes B."/>
            <person name="Huizar L."/>
            <person name="Hunter J.L."/>
            <person name="Jenkins J."/>
            <person name="Johnson-Hopson C."/>
            <person name="Khan S."/>
            <person name="Khaykin E."/>
            <person name="Kim C.J."/>
            <person name="Koo H.L."/>
            <person name="Kremenetskaia I."/>
            <person name="Kurtz D.B."/>
            <person name="Kwan A."/>
            <person name="Lam B."/>
            <person name="Langin-Hooper S."/>
            <person name="Lee A."/>
            <person name="Lee J.M."/>
            <person name="Lenz C.A."/>
            <person name="Li J.H."/>
            <person name="Li Y.-P."/>
            <person name="Lin X."/>
            <person name="Liu S.X."/>
            <person name="Liu Z.A."/>
            <person name="Luros J.S."/>
            <person name="Maiti R."/>
            <person name="Marziali A."/>
            <person name="Militscher J."/>
            <person name="Miranda M."/>
            <person name="Nguyen M."/>
            <person name="Nierman W.C."/>
            <person name="Osborne B.I."/>
            <person name="Pai G."/>
            <person name="Peterson J."/>
            <person name="Pham P.K."/>
            <person name="Rizzo M."/>
            <person name="Rooney T."/>
            <person name="Rowley D."/>
            <person name="Sakano H."/>
            <person name="Salzberg S.L."/>
            <person name="Schwartz J.R."/>
            <person name="Shinn P."/>
            <person name="Southwick A.M."/>
            <person name="Sun H."/>
            <person name="Tallon L.J."/>
            <person name="Tambunga G."/>
            <person name="Toriumi M.J."/>
            <person name="Town C.D."/>
            <person name="Utterback T."/>
            <person name="Van Aken S."/>
            <person name="Vaysberg M."/>
            <person name="Vysotskaia V.S."/>
            <person name="Walker M."/>
            <person name="Wu D."/>
            <person name="Yu G."/>
            <person name="Fraser C.M."/>
            <person name="Venter J.C."/>
            <person name="Davis R.W."/>
        </authorList>
    </citation>
    <scope>NUCLEOTIDE SEQUENCE [LARGE SCALE GENOMIC DNA]</scope>
    <source>
        <strain>cv. Columbia</strain>
    </source>
</reference>
<reference key="2">
    <citation type="journal article" date="2017" name="Plant J.">
        <title>Araport11: a complete reannotation of the Arabidopsis thaliana reference genome.</title>
        <authorList>
            <person name="Cheng C.Y."/>
            <person name="Krishnakumar V."/>
            <person name="Chan A.P."/>
            <person name="Thibaud-Nissen F."/>
            <person name="Schobel S."/>
            <person name="Town C.D."/>
        </authorList>
    </citation>
    <scope>GENOME REANNOTATION</scope>
    <source>
        <strain>cv. Columbia</strain>
    </source>
</reference>
<reference key="3">
    <citation type="submission" date="2002-03" db="EMBL/GenBank/DDBJ databases">
        <title>Full-length cDNA from Arabidopsis thaliana.</title>
        <authorList>
            <person name="Brover V.V."/>
            <person name="Troukhan M.E."/>
            <person name="Alexandrov N.A."/>
            <person name="Lu Y.-P."/>
            <person name="Flavell R.B."/>
            <person name="Feldmann K.A."/>
        </authorList>
    </citation>
    <scope>NUCLEOTIDE SEQUENCE [LARGE SCALE MRNA]</scope>
</reference>